<proteinExistence type="evidence at protein level"/>
<comment type="function">
    <text evidence="3 4">Methyltransferase that adds a 2'-O-methyl group at the 3'-end of piRNAs, a class of 24 to 30 nucleotide RNAs that are generated by a Dicer-independent mechanism and are primarily derived from transposons and other repeated sequence elements. This probably protects the 3'-end of piRNAs from uridylation activity and subsequent degradation. Stabilization of piRNAs is essential for gametogenesis.</text>
</comment>
<comment type="catalytic activity">
    <reaction evidence="3 4">
        <text>small RNA 3'-end nucleotide + S-adenosyl-L-methionine = small RNA 3'-end 2'-O-methylnucleotide + S-adenosyl-L-homocysteine + H(+)</text>
        <dbReference type="Rhea" id="RHEA:37887"/>
        <dbReference type="Rhea" id="RHEA-COMP:10415"/>
        <dbReference type="Rhea" id="RHEA-COMP:10416"/>
        <dbReference type="ChEBI" id="CHEBI:15378"/>
        <dbReference type="ChEBI" id="CHEBI:57856"/>
        <dbReference type="ChEBI" id="CHEBI:59789"/>
        <dbReference type="ChEBI" id="CHEBI:74896"/>
        <dbReference type="ChEBI" id="CHEBI:74898"/>
        <dbReference type="EC" id="2.1.1.386"/>
    </reaction>
</comment>
<comment type="cofactor">
    <cofactor evidence="2">
        <name>Mg(2+)</name>
        <dbReference type="ChEBI" id="CHEBI:18420"/>
    </cofactor>
    <text evidence="2">Binds 1 Mg(2+) ion per subunit.</text>
</comment>
<comment type="subcellular location">
    <subcellularLocation>
        <location evidence="1">Cytoplasm</location>
    </subcellularLocation>
    <text evidence="1">Component of the meiotic nuage, also named P granule, a germ-cell-specific organelle required to repress transposon activity during meiosis.</text>
</comment>
<comment type="alternative products">
    <event type="alternative splicing"/>
    <isoform>
        <id>Q8CAE2-1</id>
        <name>1</name>
        <sequence type="displayed"/>
    </isoform>
    <isoform>
        <id>Q8CAE2-2</id>
        <name>2</name>
        <sequence type="described" ref="VSP_028012"/>
    </isoform>
</comment>
<comment type="tissue specificity">
    <text evidence="3 4">Specifically expressed in testis.</text>
</comment>
<comment type="similarity">
    <text evidence="6">Belongs to the methyltransferase superfamily. HEN1 family.</text>
</comment>
<comment type="sequence caution" evidence="6">
    <conflict type="frameshift">
        <sequence resource="EMBL-CDS" id="BAC39480"/>
    </conflict>
</comment>
<feature type="chain" id="PRO_0000304141" description="Small RNA 2'-O-methyltransferase">
    <location>
        <begin position="1"/>
        <end position="395"/>
    </location>
</feature>
<feature type="binding site" evidence="2">
    <location>
        <position position="79"/>
    </location>
    <ligand>
        <name>S-adenosyl-L-methionine</name>
        <dbReference type="ChEBI" id="CHEBI:59789"/>
    </ligand>
</feature>
<feature type="binding site" evidence="2">
    <location>
        <position position="115"/>
    </location>
    <ligand>
        <name>S-adenosyl-L-methionine</name>
        <dbReference type="ChEBI" id="CHEBI:59789"/>
    </ligand>
</feature>
<feature type="binding site" evidence="2">
    <location>
        <position position="133"/>
    </location>
    <ligand>
        <name>Mg(2+)</name>
        <dbReference type="ChEBI" id="CHEBI:18420"/>
    </ligand>
</feature>
<feature type="binding site" evidence="2">
    <location>
        <position position="136"/>
    </location>
    <ligand>
        <name>Mg(2+)</name>
        <dbReference type="ChEBI" id="CHEBI:18420"/>
    </ligand>
</feature>
<feature type="binding site" evidence="2">
    <location>
        <position position="137"/>
    </location>
    <ligand>
        <name>Mg(2+)</name>
        <dbReference type="ChEBI" id="CHEBI:18420"/>
    </ligand>
</feature>
<feature type="binding site" evidence="2">
    <location>
        <position position="182"/>
    </location>
    <ligand>
        <name>Mg(2+)</name>
        <dbReference type="ChEBI" id="CHEBI:18420"/>
    </ligand>
</feature>
<feature type="splice variant" id="VSP_028012" description="In isoform 2." evidence="5">
    <location>
        <begin position="9"/>
        <end position="51"/>
    </location>
</feature>
<feature type="mutagenesis site" description="Abolishes methyltransferase activity." evidence="3">
    <original>DLGCG</original>
    <variation>NAVAV</variation>
    <location>
        <begin position="54"/>
        <end position="58"/>
    </location>
</feature>
<feature type="sequence conflict" description="In Ref. 1; BAC39480." evidence="6" ref="1">
    <original>F</original>
    <variation>L</variation>
    <location>
        <position position="319"/>
    </location>
</feature>
<sequence length="395" mass="44921">MEMAESIPCNSVVGGNFKEVSPEKVIRFKPPLYKQRYQFVRDLVDRHEPKKVADLGCGDAKLLKLLKIYPCIQLLVGVDINEEKLHSNGHRLSPYLGEFVKPRDLDLTVTLYHGSVVERDSRLLGFDLITCIELIEHLDSDDLARFPDVVFGYLSPAMVVISTPNAEFNPLFPTVTLRDADHKFEWSRMEFQTWALHVANCYNYRVEFTGVGTPPAGSEHVGYCTQIGVFTKNGGKLSKPSVSQQCDQHVYKPVYTTSYPSLQQEKVLKFVLVGELLIQVDRLRLRYQRMLRDREKDRGPKPGDMDSCPAPHLLLGAVFTEAEKARIESSPKPFCEGEKFYIPLQRLLTYPKLHRLCADEDRVRSLIADSVCLSSDGSAVVVDLHNSWDYRPEEN</sequence>
<organism>
    <name type="scientific">Mus musculus</name>
    <name type="common">Mouse</name>
    <dbReference type="NCBI Taxonomy" id="10090"/>
    <lineage>
        <taxon>Eukaryota</taxon>
        <taxon>Metazoa</taxon>
        <taxon>Chordata</taxon>
        <taxon>Craniata</taxon>
        <taxon>Vertebrata</taxon>
        <taxon>Euteleostomi</taxon>
        <taxon>Mammalia</taxon>
        <taxon>Eutheria</taxon>
        <taxon>Euarchontoglires</taxon>
        <taxon>Glires</taxon>
        <taxon>Rodentia</taxon>
        <taxon>Myomorpha</taxon>
        <taxon>Muroidea</taxon>
        <taxon>Muridae</taxon>
        <taxon>Murinae</taxon>
        <taxon>Mus</taxon>
        <taxon>Mus</taxon>
    </lineage>
</organism>
<protein>
    <recommendedName>
        <fullName>Small RNA 2'-O-methyltransferase</fullName>
        <ecNumber evidence="3 4">2.1.1.386</ecNumber>
    </recommendedName>
    <alternativeName>
        <fullName>HEN1 methyltransferase homolog 1</fullName>
        <shortName>mHEN1</shortName>
    </alternativeName>
</protein>
<name>HENMT_MOUSE</name>
<accession>Q8CAE2</accession>
<accession>A2VCS5</accession>
<accession>Q8C3K8</accession>
<keyword id="KW-0025">Alternative splicing</keyword>
<keyword id="KW-0963">Cytoplasm</keyword>
<keyword id="KW-0460">Magnesium</keyword>
<keyword id="KW-0479">Metal-binding</keyword>
<keyword id="KW-0489">Methyltransferase</keyword>
<keyword id="KW-1185">Reference proteome</keyword>
<keyword id="KW-0694">RNA-binding</keyword>
<keyword id="KW-0943">RNA-mediated gene silencing</keyword>
<keyword id="KW-0949">S-adenosyl-L-methionine</keyword>
<keyword id="KW-0808">Transferase</keyword>
<gene>
    <name type="primary">Henmt1</name>
</gene>
<evidence type="ECO:0000250" key="1">
    <source>
        <dbReference type="UniProtKB" id="Q568P9"/>
    </source>
</evidence>
<evidence type="ECO:0000250" key="2">
    <source>
        <dbReference type="UniProtKB" id="Q9C5Q8"/>
    </source>
</evidence>
<evidence type="ECO:0000269" key="3">
    <source>
    </source>
</evidence>
<evidence type="ECO:0000269" key="4">
    <source>
    </source>
</evidence>
<evidence type="ECO:0000303" key="5">
    <source>
    </source>
</evidence>
<evidence type="ECO:0000305" key="6"/>
<dbReference type="EC" id="2.1.1.386" evidence="3 4"/>
<dbReference type="EMBL" id="AK038994">
    <property type="protein sequence ID" value="BAC30196.1"/>
    <property type="molecule type" value="mRNA"/>
</dbReference>
<dbReference type="EMBL" id="AK085587">
    <property type="protein sequence ID" value="BAC39480.1"/>
    <property type="status" value="ALT_FRAME"/>
    <property type="molecule type" value="mRNA"/>
</dbReference>
<dbReference type="EMBL" id="AL671894">
    <property type="status" value="NOT_ANNOTATED_CDS"/>
    <property type="molecule type" value="Genomic_DNA"/>
</dbReference>
<dbReference type="EMBL" id="BC099408">
    <property type="protein sequence ID" value="AAH99408.1"/>
    <property type="molecule type" value="mRNA"/>
</dbReference>
<dbReference type="EMBL" id="BC128494">
    <property type="protein sequence ID" value="AAI28495.1"/>
    <property type="molecule type" value="mRNA"/>
</dbReference>
<dbReference type="EMBL" id="BC128495">
    <property type="protein sequence ID" value="AAI28496.1"/>
    <property type="molecule type" value="mRNA"/>
</dbReference>
<dbReference type="CCDS" id="CCDS38602.1">
    <molecule id="Q8CAE2-1"/>
</dbReference>
<dbReference type="RefSeq" id="NP_001072114.1">
    <molecule id="Q8CAE2-1"/>
    <property type="nucleotide sequence ID" value="NM_001078646.1"/>
</dbReference>
<dbReference type="RefSeq" id="NP_079999.2">
    <molecule id="Q8CAE2-1"/>
    <property type="nucleotide sequence ID" value="NM_025723.2"/>
</dbReference>
<dbReference type="RefSeq" id="XP_006501961.1">
    <molecule id="Q8CAE2-2"/>
    <property type="nucleotide sequence ID" value="XM_006501898.3"/>
</dbReference>
<dbReference type="RefSeq" id="XP_036019121.1">
    <molecule id="Q8CAE2-2"/>
    <property type="nucleotide sequence ID" value="XM_036163228.1"/>
</dbReference>
<dbReference type="SMR" id="Q8CAE2"/>
<dbReference type="FunCoup" id="Q8CAE2">
    <property type="interactions" value="1030"/>
</dbReference>
<dbReference type="STRING" id="10090.ENSMUSP00000054829"/>
<dbReference type="PhosphoSitePlus" id="Q8CAE2"/>
<dbReference type="SwissPalm" id="Q8CAE2"/>
<dbReference type="PaxDb" id="10090-ENSMUSP00000054829"/>
<dbReference type="ProteomicsDB" id="269591">
    <molecule id="Q8CAE2-1"/>
</dbReference>
<dbReference type="ProteomicsDB" id="269592">
    <molecule id="Q8CAE2-2"/>
</dbReference>
<dbReference type="Antibodypedia" id="33732">
    <property type="antibodies" value="47 antibodies from 14 providers"/>
</dbReference>
<dbReference type="Ensembl" id="ENSMUST00000059946.11">
    <molecule id="Q8CAE2-1"/>
    <property type="protein sequence ID" value="ENSMUSP00000054829.5"/>
    <property type="gene ID" value="ENSMUSG00000045662.18"/>
</dbReference>
<dbReference type="Ensembl" id="ENSMUST00000106586.7">
    <molecule id="Q8CAE2-1"/>
    <property type="protein sequence ID" value="ENSMUSP00000102196.3"/>
    <property type="gene ID" value="ENSMUSG00000045662.18"/>
</dbReference>
<dbReference type="Ensembl" id="ENSMUST00000196533.2">
    <molecule id="Q8CAE2-2"/>
    <property type="protein sequence ID" value="ENSMUSP00000143574.2"/>
    <property type="gene ID" value="ENSMUSG00000045662.18"/>
</dbReference>
<dbReference type="GeneID" id="66715"/>
<dbReference type="KEGG" id="mmu:66715"/>
<dbReference type="UCSC" id="uc008qzz.1">
    <molecule id="Q8CAE2-1"/>
    <property type="organism name" value="mouse"/>
</dbReference>
<dbReference type="UCSC" id="uc008rab.1">
    <molecule id="Q8CAE2-2"/>
    <property type="organism name" value="mouse"/>
</dbReference>
<dbReference type="AGR" id="MGI:1913965"/>
<dbReference type="CTD" id="113802"/>
<dbReference type="MGI" id="MGI:1913965">
    <property type="gene designation" value="Henmt1"/>
</dbReference>
<dbReference type="VEuPathDB" id="HostDB:ENSMUSG00000045662"/>
<dbReference type="eggNOG" id="KOG1045">
    <property type="taxonomic scope" value="Eukaryota"/>
</dbReference>
<dbReference type="GeneTree" id="ENSGT00390000004798"/>
<dbReference type="HOGENOM" id="CLU_044646_0_0_1"/>
<dbReference type="InParanoid" id="Q8CAE2"/>
<dbReference type="OMA" id="HQFVVDF"/>
<dbReference type="OrthoDB" id="2154311at2759"/>
<dbReference type="PhylomeDB" id="Q8CAE2"/>
<dbReference type="TreeFam" id="TF315178"/>
<dbReference type="BioGRID-ORCS" id="66715">
    <property type="hits" value="3 hits in 78 CRISPR screens"/>
</dbReference>
<dbReference type="ChiTaRS" id="Henmt1">
    <property type="organism name" value="mouse"/>
</dbReference>
<dbReference type="PRO" id="PR:Q8CAE2"/>
<dbReference type="Proteomes" id="UP000000589">
    <property type="component" value="Chromosome 3"/>
</dbReference>
<dbReference type="RNAct" id="Q8CAE2">
    <property type="molecule type" value="protein"/>
</dbReference>
<dbReference type="Bgee" id="ENSMUSG00000045662">
    <property type="expression patterns" value="Expressed in spermatocyte and 31 other cell types or tissues"/>
</dbReference>
<dbReference type="ExpressionAtlas" id="Q8CAE2">
    <property type="expression patterns" value="baseline and differential"/>
</dbReference>
<dbReference type="GO" id="GO:0005829">
    <property type="term" value="C:cytosol"/>
    <property type="evidence" value="ECO:0000304"/>
    <property type="project" value="Reactome"/>
</dbReference>
<dbReference type="GO" id="GO:0043186">
    <property type="term" value="C:P granule"/>
    <property type="evidence" value="ECO:0000250"/>
    <property type="project" value="UniProtKB"/>
</dbReference>
<dbReference type="GO" id="GO:0046872">
    <property type="term" value="F:metal ion binding"/>
    <property type="evidence" value="ECO:0007669"/>
    <property type="project" value="UniProtKB-KW"/>
</dbReference>
<dbReference type="GO" id="GO:0008171">
    <property type="term" value="F:O-methyltransferase activity"/>
    <property type="evidence" value="ECO:0000314"/>
    <property type="project" value="UniProtKB"/>
</dbReference>
<dbReference type="GO" id="GO:0003723">
    <property type="term" value="F:RNA binding"/>
    <property type="evidence" value="ECO:0007669"/>
    <property type="project" value="UniProtKB-KW"/>
</dbReference>
<dbReference type="GO" id="GO:0008173">
    <property type="term" value="F:RNA methyltransferase activity"/>
    <property type="evidence" value="ECO:0000314"/>
    <property type="project" value="UniProtKB"/>
</dbReference>
<dbReference type="GO" id="GO:0090486">
    <property type="term" value="F:small RNA 2'-O-methyltransferase activity"/>
    <property type="evidence" value="ECO:0007669"/>
    <property type="project" value="Ensembl"/>
</dbReference>
<dbReference type="GO" id="GO:0034587">
    <property type="term" value="P:piRNA processing"/>
    <property type="evidence" value="ECO:0000314"/>
    <property type="project" value="UniProtKB"/>
</dbReference>
<dbReference type="GO" id="GO:0001510">
    <property type="term" value="P:RNA methylation"/>
    <property type="evidence" value="ECO:0000314"/>
    <property type="project" value="UniProtKB"/>
</dbReference>
<dbReference type="FunFam" id="3.40.50.150:FF:000124">
    <property type="entry name" value="HEN methyltransferase 1"/>
    <property type="match status" value="1"/>
</dbReference>
<dbReference type="Gene3D" id="3.40.50.150">
    <property type="entry name" value="Vaccinia Virus protein VP39"/>
    <property type="match status" value="1"/>
</dbReference>
<dbReference type="InterPro" id="IPR026610">
    <property type="entry name" value="Hen1"/>
</dbReference>
<dbReference type="InterPro" id="IPR029063">
    <property type="entry name" value="SAM-dependent_MTases_sf"/>
</dbReference>
<dbReference type="PANTHER" id="PTHR21404">
    <property type="entry name" value="HEN1"/>
    <property type="match status" value="1"/>
</dbReference>
<dbReference type="PANTHER" id="PTHR21404:SF3">
    <property type="entry name" value="SMALL RNA 2'-O-METHYLTRANSFERASE"/>
    <property type="match status" value="1"/>
</dbReference>
<dbReference type="Pfam" id="PF13489">
    <property type="entry name" value="Methyltransf_23"/>
    <property type="match status" value="1"/>
</dbReference>
<dbReference type="SUPFAM" id="SSF53335">
    <property type="entry name" value="S-adenosyl-L-methionine-dependent methyltransferases"/>
    <property type="match status" value="1"/>
</dbReference>
<reference key="1">
    <citation type="journal article" date="2005" name="Science">
        <title>The transcriptional landscape of the mammalian genome.</title>
        <authorList>
            <person name="Carninci P."/>
            <person name="Kasukawa T."/>
            <person name="Katayama S."/>
            <person name="Gough J."/>
            <person name="Frith M.C."/>
            <person name="Maeda N."/>
            <person name="Oyama R."/>
            <person name="Ravasi T."/>
            <person name="Lenhard B."/>
            <person name="Wells C."/>
            <person name="Kodzius R."/>
            <person name="Shimokawa K."/>
            <person name="Bajic V.B."/>
            <person name="Brenner S.E."/>
            <person name="Batalov S."/>
            <person name="Forrest A.R."/>
            <person name="Zavolan M."/>
            <person name="Davis M.J."/>
            <person name="Wilming L.G."/>
            <person name="Aidinis V."/>
            <person name="Allen J.E."/>
            <person name="Ambesi-Impiombato A."/>
            <person name="Apweiler R."/>
            <person name="Aturaliya R.N."/>
            <person name="Bailey T.L."/>
            <person name="Bansal M."/>
            <person name="Baxter L."/>
            <person name="Beisel K.W."/>
            <person name="Bersano T."/>
            <person name="Bono H."/>
            <person name="Chalk A.M."/>
            <person name="Chiu K.P."/>
            <person name="Choudhary V."/>
            <person name="Christoffels A."/>
            <person name="Clutterbuck D.R."/>
            <person name="Crowe M.L."/>
            <person name="Dalla E."/>
            <person name="Dalrymple B.P."/>
            <person name="de Bono B."/>
            <person name="Della Gatta G."/>
            <person name="di Bernardo D."/>
            <person name="Down T."/>
            <person name="Engstrom P."/>
            <person name="Fagiolini M."/>
            <person name="Faulkner G."/>
            <person name="Fletcher C.F."/>
            <person name="Fukushima T."/>
            <person name="Furuno M."/>
            <person name="Futaki S."/>
            <person name="Gariboldi M."/>
            <person name="Georgii-Hemming P."/>
            <person name="Gingeras T.R."/>
            <person name="Gojobori T."/>
            <person name="Green R.E."/>
            <person name="Gustincich S."/>
            <person name="Harbers M."/>
            <person name="Hayashi Y."/>
            <person name="Hensch T.K."/>
            <person name="Hirokawa N."/>
            <person name="Hill D."/>
            <person name="Huminiecki L."/>
            <person name="Iacono M."/>
            <person name="Ikeo K."/>
            <person name="Iwama A."/>
            <person name="Ishikawa T."/>
            <person name="Jakt M."/>
            <person name="Kanapin A."/>
            <person name="Katoh M."/>
            <person name="Kawasawa Y."/>
            <person name="Kelso J."/>
            <person name="Kitamura H."/>
            <person name="Kitano H."/>
            <person name="Kollias G."/>
            <person name="Krishnan S.P."/>
            <person name="Kruger A."/>
            <person name="Kummerfeld S.K."/>
            <person name="Kurochkin I.V."/>
            <person name="Lareau L.F."/>
            <person name="Lazarevic D."/>
            <person name="Lipovich L."/>
            <person name="Liu J."/>
            <person name="Liuni S."/>
            <person name="McWilliam S."/>
            <person name="Madan Babu M."/>
            <person name="Madera M."/>
            <person name="Marchionni L."/>
            <person name="Matsuda H."/>
            <person name="Matsuzawa S."/>
            <person name="Miki H."/>
            <person name="Mignone F."/>
            <person name="Miyake S."/>
            <person name="Morris K."/>
            <person name="Mottagui-Tabar S."/>
            <person name="Mulder N."/>
            <person name="Nakano N."/>
            <person name="Nakauchi H."/>
            <person name="Ng P."/>
            <person name="Nilsson R."/>
            <person name="Nishiguchi S."/>
            <person name="Nishikawa S."/>
            <person name="Nori F."/>
            <person name="Ohara O."/>
            <person name="Okazaki Y."/>
            <person name="Orlando V."/>
            <person name="Pang K.C."/>
            <person name="Pavan W.J."/>
            <person name="Pavesi G."/>
            <person name="Pesole G."/>
            <person name="Petrovsky N."/>
            <person name="Piazza S."/>
            <person name="Reed J."/>
            <person name="Reid J.F."/>
            <person name="Ring B.Z."/>
            <person name="Ringwald M."/>
            <person name="Rost B."/>
            <person name="Ruan Y."/>
            <person name="Salzberg S.L."/>
            <person name="Sandelin A."/>
            <person name="Schneider C."/>
            <person name="Schoenbach C."/>
            <person name="Sekiguchi K."/>
            <person name="Semple C.A."/>
            <person name="Seno S."/>
            <person name="Sessa L."/>
            <person name="Sheng Y."/>
            <person name="Shibata Y."/>
            <person name="Shimada H."/>
            <person name="Shimada K."/>
            <person name="Silva D."/>
            <person name="Sinclair B."/>
            <person name="Sperling S."/>
            <person name="Stupka E."/>
            <person name="Sugiura K."/>
            <person name="Sultana R."/>
            <person name="Takenaka Y."/>
            <person name="Taki K."/>
            <person name="Tammoja K."/>
            <person name="Tan S.L."/>
            <person name="Tang S."/>
            <person name="Taylor M.S."/>
            <person name="Tegner J."/>
            <person name="Teichmann S.A."/>
            <person name="Ueda H.R."/>
            <person name="van Nimwegen E."/>
            <person name="Verardo R."/>
            <person name="Wei C.L."/>
            <person name="Yagi K."/>
            <person name="Yamanishi H."/>
            <person name="Zabarovsky E."/>
            <person name="Zhu S."/>
            <person name="Zimmer A."/>
            <person name="Hide W."/>
            <person name="Bult C."/>
            <person name="Grimmond S.M."/>
            <person name="Teasdale R.D."/>
            <person name="Liu E.T."/>
            <person name="Brusic V."/>
            <person name="Quackenbush J."/>
            <person name="Wahlestedt C."/>
            <person name="Mattick J.S."/>
            <person name="Hume D.A."/>
            <person name="Kai C."/>
            <person name="Sasaki D."/>
            <person name="Tomaru Y."/>
            <person name="Fukuda S."/>
            <person name="Kanamori-Katayama M."/>
            <person name="Suzuki M."/>
            <person name="Aoki J."/>
            <person name="Arakawa T."/>
            <person name="Iida J."/>
            <person name="Imamura K."/>
            <person name="Itoh M."/>
            <person name="Kato T."/>
            <person name="Kawaji H."/>
            <person name="Kawagashira N."/>
            <person name="Kawashima T."/>
            <person name="Kojima M."/>
            <person name="Kondo S."/>
            <person name="Konno H."/>
            <person name="Nakano K."/>
            <person name="Ninomiya N."/>
            <person name="Nishio T."/>
            <person name="Okada M."/>
            <person name="Plessy C."/>
            <person name="Shibata K."/>
            <person name="Shiraki T."/>
            <person name="Suzuki S."/>
            <person name="Tagami M."/>
            <person name="Waki K."/>
            <person name="Watahiki A."/>
            <person name="Okamura-Oho Y."/>
            <person name="Suzuki H."/>
            <person name="Kawai J."/>
            <person name="Hayashizaki Y."/>
        </authorList>
    </citation>
    <scope>NUCLEOTIDE SEQUENCE [LARGE SCALE MRNA] (ISOFORM 1)</scope>
    <source>
        <strain>C57BL/6J</strain>
        <tissue>Hypothalamus</tissue>
        <tissue>Kidney</tissue>
    </source>
</reference>
<reference key="2">
    <citation type="journal article" date="2009" name="PLoS Biol.">
        <title>Lineage-specific biology revealed by a finished genome assembly of the mouse.</title>
        <authorList>
            <person name="Church D.M."/>
            <person name="Goodstadt L."/>
            <person name="Hillier L.W."/>
            <person name="Zody M.C."/>
            <person name="Goldstein S."/>
            <person name="She X."/>
            <person name="Bult C.J."/>
            <person name="Agarwala R."/>
            <person name="Cherry J.L."/>
            <person name="DiCuccio M."/>
            <person name="Hlavina W."/>
            <person name="Kapustin Y."/>
            <person name="Meric P."/>
            <person name="Maglott D."/>
            <person name="Birtle Z."/>
            <person name="Marques A.C."/>
            <person name="Graves T."/>
            <person name="Zhou S."/>
            <person name="Teague B."/>
            <person name="Potamousis K."/>
            <person name="Churas C."/>
            <person name="Place M."/>
            <person name="Herschleb J."/>
            <person name="Runnheim R."/>
            <person name="Forrest D."/>
            <person name="Amos-Landgraf J."/>
            <person name="Schwartz D.C."/>
            <person name="Cheng Z."/>
            <person name="Lindblad-Toh K."/>
            <person name="Eichler E.E."/>
            <person name="Ponting C.P."/>
        </authorList>
    </citation>
    <scope>NUCLEOTIDE SEQUENCE [LARGE SCALE GENOMIC DNA]</scope>
    <source>
        <strain>C57BL/6J</strain>
    </source>
</reference>
<reference key="3">
    <citation type="journal article" date="2004" name="Genome Res.">
        <title>The status, quality, and expansion of the NIH full-length cDNA project: the Mammalian Gene Collection (MGC).</title>
        <authorList>
            <consortium name="The MGC Project Team"/>
        </authorList>
    </citation>
    <scope>NUCLEOTIDE SEQUENCE [LARGE SCALE MRNA] (ISOFORM 1)</scope>
    <scope>NUCLEOTIDE SEQUENCE [LARGE SCALE MRNA] OF 1-355 (ISOFORM 2)</scope>
    <source>
        <tissue>Oocyte</tissue>
    </source>
</reference>
<reference key="4">
    <citation type="journal article" date="2007" name="Nucleic Acids Symp. Ser.">
        <title>2'-O-methyl modification in mouse piRNAs and its methylase.</title>
        <authorList>
            <person name="Kirino Y."/>
            <person name="Mourelatos Z."/>
        </authorList>
    </citation>
    <scope>FUNCTION</scope>
    <scope>CATALYTIC ACTIVITY</scope>
    <scope>TISSUE SPECIFICITY</scope>
</reference>
<reference key="5">
    <citation type="journal article" date="2007" name="RNA">
        <title>The mouse homolog of HEN1 is a potential methylase for Piwi-interacting RNAs.</title>
        <authorList>
            <person name="Kirino Y."/>
            <person name="Mourelatos Z."/>
        </authorList>
    </citation>
    <scope>FUNCTION</scope>
    <scope>CATALYTIC ACTIVITY</scope>
    <scope>TISSUE SPECIFICITY</scope>
    <scope>MUTAGENESIS OF 54-ASP--GLY-58</scope>
</reference>